<protein>
    <recommendedName>
        <fullName evidence="5">Short-chain dehydrogenase/reductase ATR7</fullName>
        <ecNumber evidence="7">1.-.-.-</ecNumber>
    </recommendedName>
    <alternativeName>
        <fullName evidence="5">Core atranone cluster (CAC) protein 7</fullName>
    </alternativeName>
</protein>
<dbReference type="EC" id="1.-.-.-" evidence="7"/>
<dbReference type="EMBL" id="KL659308">
    <property type="protein sequence ID" value="KFA70086.1"/>
    <property type="molecule type" value="Genomic_DNA"/>
</dbReference>
<dbReference type="SMR" id="A0A084R1K1"/>
<dbReference type="STRING" id="1283841.A0A084R1K1"/>
<dbReference type="HOGENOM" id="CLU_010194_13_1_1"/>
<dbReference type="InParanoid" id="A0A084R1K1"/>
<dbReference type="OrthoDB" id="5371740at2759"/>
<dbReference type="Proteomes" id="UP000028524">
    <property type="component" value="Unassembled WGS sequence"/>
</dbReference>
<dbReference type="GO" id="GO:0016491">
    <property type="term" value="F:oxidoreductase activity"/>
    <property type="evidence" value="ECO:0007669"/>
    <property type="project" value="UniProtKB-KW"/>
</dbReference>
<dbReference type="Gene3D" id="3.40.50.720">
    <property type="entry name" value="NAD(P)-binding Rossmann-like Domain"/>
    <property type="match status" value="1"/>
</dbReference>
<dbReference type="InterPro" id="IPR036291">
    <property type="entry name" value="NAD(P)-bd_dom_sf"/>
</dbReference>
<dbReference type="InterPro" id="IPR020904">
    <property type="entry name" value="Sc_DH/Rdtase_CS"/>
</dbReference>
<dbReference type="InterPro" id="IPR002347">
    <property type="entry name" value="SDR_fam"/>
</dbReference>
<dbReference type="PANTHER" id="PTHR43180">
    <property type="entry name" value="3-OXOACYL-(ACYL-CARRIER-PROTEIN) REDUCTASE (AFU_ORTHOLOGUE AFUA_6G11210)"/>
    <property type="match status" value="1"/>
</dbReference>
<dbReference type="PANTHER" id="PTHR43180:SF80">
    <property type="entry name" value="NAD(P)-BINDING PROTEIN"/>
    <property type="match status" value="1"/>
</dbReference>
<dbReference type="Pfam" id="PF00106">
    <property type="entry name" value="adh_short"/>
    <property type="match status" value="1"/>
</dbReference>
<dbReference type="PRINTS" id="PR00081">
    <property type="entry name" value="GDHRDH"/>
</dbReference>
<dbReference type="SUPFAM" id="SSF51735">
    <property type="entry name" value="NAD(P)-binding Rossmann-fold domains"/>
    <property type="match status" value="1"/>
</dbReference>
<dbReference type="PROSITE" id="PS00061">
    <property type="entry name" value="ADH_SHORT"/>
    <property type="match status" value="1"/>
</dbReference>
<organism>
    <name type="scientific">Stachybotrys chlorohalonatus (strain IBT 40285)</name>
    <dbReference type="NCBI Taxonomy" id="1283841"/>
    <lineage>
        <taxon>Eukaryota</taxon>
        <taxon>Fungi</taxon>
        <taxon>Dikarya</taxon>
        <taxon>Ascomycota</taxon>
        <taxon>Pezizomycotina</taxon>
        <taxon>Sordariomycetes</taxon>
        <taxon>Hypocreomycetidae</taxon>
        <taxon>Hypocreales</taxon>
        <taxon>Stachybotryaceae</taxon>
        <taxon>Stachybotrys</taxon>
    </lineage>
</organism>
<comment type="function">
    <text evidence="3 7">Short-chain dehydrogenase/reductase; part of the core atranone cluster (CAC) which products are predicted to catalyze most or all steps of mycotoxin atranone synthesis, starting from geranylgeranyl pyrophosphate (GGPP) (PubMed:25015739). The initial cyclization of GGPP to dolabellane is probably performed by the terpene cyclase ATR13 (PubMed:25015739). The Baeyer-Villiger oxidation near the end of the atranone synthesis, which converts atranones D and E to atranones F and G is predicted to be catalyzed by the monooxygenase ATR8 (PubMed:25015739). Of the CAC's other predicted gene products, the reducing PKS ATR6 might synthesize a polyketide chain (PubMed:25015739). This polyketide is probably transferred onto the atranone backbone by the polyketide transferase ATR5 (By similarity). Other predicted CAC products include 4 oxygenases (ATR2, ATR3, ATR4, and ATR14), 3 short-chain reductases (ATR7, ATR9, and ATR10), and a methyltransferase (ATR12) (PubMed:25015739). These may all be involved in the various steps of atranone biosynthesis, although their specific roles must await experimental determination (PubMed:25015739).</text>
</comment>
<comment type="pathway">
    <text evidence="7">Mycotoxin biosynthesis.</text>
</comment>
<comment type="similarity">
    <text evidence="6">Belongs to the short-chain dehydrogenases/reductases (SDR) family.</text>
</comment>
<proteinExistence type="inferred from homology"/>
<feature type="chain" id="PRO_0000442404" description="Short-chain dehydrogenase/reductase ATR7">
    <location>
        <begin position="1"/>
        <end position="320"/>
    </location>
</feature>
<feature type="active site" description="Proton acceptor" evidence="4">
    <location>
        <position position="167"/>
    </location>
</feature>
<feature type="active site" description="Lowers pKa of active site Tyr" evidence="2">
    <location>
        <position position="171"/>
    </location>
</feature>
<feature type="binding site" evidence="1">
    <location>
        <position position="32"/>
    </location>
    <ligand>
        <name>NADP(+)</name>
        <dbReference type="ChEBI" id="CHEBI:58349"/>
    </ligand>
</feature>
<feature type="binding site" evidence="1">
    <location>
        <position position="34"/>
    </location>
    <ligand>
        <name>NADP(+)</name>
        <dbReference type="ChEBI" id="CHEBI:58349"/>
    </ligand>
</feature>
<feature type="binding site" evidence="1">
    <location>
        <position position="55"/>
    </location>
    <ligand>
        <name>NADP(+)</name>
        <dbReference type="ChEBI" id="CHEBI:58349"/>
    </ligand>
</feature>
<feature type="binding site" evidence="1">
    <location>
        <position position="70"/>
    </location>
    <ligand>
        <name>NADP(+)</name>
        <dbReference type="ChEBI" id="CHEBI:58349"/>
    </ligand>
</feature>
<feature type="binding site" evidence="2">
    <location>
        <position position="93"/>
    </location>
    <ligand>
        <name>NADP(+)</name>
        <dbReference type="ChEBI" id="CHEBI:58349"/>
    </ligand>
</feature>
<feature type="binding site" evidence="1">
    <location>
        <position position="134"/>
    </location>
    <ligand>
        <name>NADP(+)</name>
        <dbReference type="ChEBI" id="CHEBI:58349"/>
    </ligand>
</feature>
<feature type="binding site" evidence="2">
    <location>
        <position position="167"/>
    </location>
    <ligand>
        <name>NADP(+)</name>
        <dbReference type="ChEBI" id="CHEBI:58349"/>
    </ligand>
</feature>
<feature type="binding site" evidence="2">
    <location>
        <position position="171"/>
    </location>
    <ligand>
        <name>NADP(+)</name>
        <dbReference type="ChEBI" id="CHEBI:58349"/>
    </ligand>
</feature>
<feature type="binding site" evidence="1">
    <location>
        <position position="202"/>
    </location>
    <ligand>
        <name>NADP(+)</name>
        <dbReference type="ChEBI" id="CHEBI:58349"/>
    </ligand>
</feature>
<accession>A0A084R1K1</accession>
<evidence type="ECO:0000250" key="1">
    <source>
        <dbReference type="UniProtKB" id="L0E2Z4"/>
    </source>
</evidence>
<evidence type="ECO:0000250" key="2">
    <source>
        <dbReference type="UniProtKB" id="O93868"/>
    </source>
</evidence>
<evidence type="ECO:0000250" key="3">
    <source>
        <dbReference type="UniProtKB" id="Q4WAY4"/>
    </source>
</evidence>
<evidence type="ECO:0000255" key="4">
    <source>
        <dbReference type="PROSITE-ProRule" id="PRU10001"/>
    </source>
</evidence>
<evidence type="ECO:0000303" key="5">
    <source>
    </source>
</evidence>
<evidence type="ECO:0000305" key="6"/>
<evidence type="ECO:0000305" key="7">
    <source>
    </source>
</evidence>
<keyword id="KW-0521">NADP</keyword>
<keyword id="KW-0560">Oxidoreductase</keyword>
<keyword id="KW-1185">Reference proteome</keyword>
<sequence length="320" mass="34765">MSTLTIDPTSIPPLEGKTAVVTATPLVPGGASGIGLAAAKIMLQKGATVYALDRQEPIEAVPGLKFRRCDVTSWSALREVFDEIQQVHLAFANAGICDKSPESYYDDVCDNGNLQEPDYSMIDVNLKAVLNFVKLARHSMRRHQVQGSIVITASSTGLVPEQSAPVYSSTKFAVIGLVRTLRSVLIQENITINAVAPFVTTTGMAPAEAMVPLKNLGVQTSPADFVGLALVYSAVARQTRRVEAYGKETEEDILEHGRWNGRVILTLGDKYTEVEEEFSKSRPLWTGGEVLQSIRLQQAVLDFRHGGVAIKSNRPSNQLN</sequence>
<gene>
    <name evidence="5" type="primary">ATR7</name>
    <name type="ORF">S40285_03332</name>
</gene>
<reference key="1">
    <citation type="journal article" date="2014" name="BMC Genomics">
        <title>Comparative genome sequencing reveals chemotype-specific gene clusters in the toxigenic black mold Stachybotrys.</title>
        <authorList>
            <person name="Semeiks J."/>
            <person name="Borek D."/>
            <person name="Otwinowski Z."/>
            <person name="Grishin N.V."/>
        </authorList>
    </citation>
    <scope>NUCLEOTIDE SEQUENCE [LARGE SCALE GENOMIC DNA]</scope>
    <scope>IDENTIFICATION</scope>
    <scope>FUNCTION</scope>
    <source>
        <strain>IBT 40285</strain>
    </source>
</reference>
<name>ATR7_STAC4</name>